<dbReference type="EC" id="5.6.1.7" evidence="1"/>
<dbReference type="EMBL" id="CP000393">
    <property type="protein sequence ID" value="ABG53320.1"/>
    <property type="molecule type" value="Genomic_DNA"/>
</dbReference>
<dbReference type="RefSeq" id="WP_011613646.1">
    <property type="nucleotide sequence ID" value="NC_008312.1"/>
</dbReference>
<dbReference type="SMR" id="Q10WQ4"/>
<dbReference type="STRING" id="203124.Tery_4327"/>
<dbReference type="KEGG" id="ter:Tery_4327"/>
<dbReference type="eggNOG" id="COG0459">
    <property type="taxonomic scope" value="Bacteria"/>
</dbReference>
<dbReference type="HOGENOM" id="CLU_016503_3_0_3"/>
<dbReference type="OrthoDB" id="9766614at2"/>
<dbReference type="GO" id="GO:0005737">
    <property type="term" value="C:cytoplasm"/>
    <property type="evidence" value="ECO:0007669"/>
    <property type="project" value="UniProtKB-SubCell"/>
</dbReference>
<dbReference type="GO" id="GO:0005524">
    <property type="term" value="F:ATP binding"/>
    <property type="evidence" value="ECO:0007669"/>
    <property type="project" value="UniProtKB-UniRule"/>
</dbReference>
<dbReference type="GO" id="GO:0140662">
    <property type="term" value="F:ATP-dependent protein folding chaperone"/>
    <property type="evidence" value="ECO:0007669"/>
    <property type="project" value="InterPro"/>
</dbReference>
<dbReference type="GO" id="GO:0016853">
    <property type="term" value="F:isomerase activity"/>
    <property type="evidence" value="ECO:0007669"/>
    <property type="project" value="UniProtKB-KW"/>
</dbReference>
<dbReference type="GO" id="GO:0051082">
    <property type="term" value="F:unfolded protein binding"/>
    <property type="evidence" value="ECO:0007669"/>
    <property type="project" value="UniProtKB-UniRule"/>
</dbReference>
<dbReference type="GO" id="GO:0042026">
    <property type="term" value="P:protein refolding"/>
    <property type="evidence" value="ECO:0007669"/>
    <property type="project" value="UniProtKB-UniRule"/>
</dbReference>
<dbReference type="CDD" id="cd03344">
    <property type="entry name" value="GroEL"/>
    <property type="match status" value="1"/>
</dbReference>
<dbReference type="FunFam" id="3.50.7.10:FF:000001">
    <property type="entry name" value="60 kDa chaperonin"/>
    <property type="match status" value="1"/>
</dbReference>
<dbReference type="Gene3D" id="3.50.7.10">
    <property type="entry name" value="GroEL"/>
    <property type="match status" value="1"/>
</dbReference>
<dbReference type="Gene3D" id="1.10.560.10">
    <property type="entry name" value="GroEL-like equatorial domain"/>
    <property type="match status" value="1"/>
</dbReference>
<dbReference type="Gene3D" id="3.30.260.10">
    <property type="entry name" value="TCP-1-like chaperonin intermediate domain"/>
    <property type="match status" value="1"/>
</dbReference>
<dbReference type="HAMAP" id="MF_00600">
    <property type="entry name" value="CH60"/>
    <property type="match status" value="1"/>
</dbReference>
<dbReference type="InterPro" id="IPR018370">
    <property type="entry name" value="Chaperonin_Cpn60_CS"/>
</dbReference>
<dbReference type="InterPro" id="IPR001844">
    <property type="entry name" value="Cpn60/GroEL"/>
</dbReference>
<dbReference type="InterPro" id="IPR002423">
    <property type="entry name" value="Cpn60/GroEL/TCP-1"/>
</dbReference>
<dbReference type="InterPro" id="IPR027409">
    <property type="entry name" value="GroEL-like_apical_dom_sf"/>
</dbReference>
<dbReference type="InterPro" id="IPR027413">
    <property type="entry name" value="GROEL-like_equatorial_sf"/>
</dbReference>
<dbReference type="InterPro" id="IPR027410">
    <property type="entry name" value="TCP-1-like_intermed_sf"/>
</dbReference>
<dbReference type="NCBIfam" id="TIGR02348">
    <property type="entry name" value="GroEL"/>
    <property type="match status" value="1"/>
</dbReference>
<dbReference type="NCBIfam" id="NF000592">
    <property type="entry name" value="PRK00013.1"/>
    <property type="match status" value="1"/>
</dbReference>
<dbReference type="NCBIfam" id="NF009487">
    <property type="entry name" value="PRK12849.1"/>
    <property type="match status" value="1"/>
</dbReference>
<dbReference type="NCBIfam" id="NF009488">
    <property type="entry name" value="PRK12850.1"/>
    <property type="match status" value="1"/>
</dbReference>
<dbReference type="NCBIfam" id="NF009489">
    <property type="entry name" value="PRK12851.1"/>
    <property type="match status" value="1"/>
</dbReference>
<dbReference type="PANTHER" id="PTHR45633">
    <property type="entry name" value="60 KDA HEAT SHOCK PROTEIN, MITOCHONDRIAL"/>
    <property type="match status" value="1"/>
</dbReference>
<dbReference type="Pfam" id="PF00118">
    <property type="entry name" value="Cpn60_TCP1"/>
    <property type="match status" value="1"/>
</dbReference>
<dbReference type="PRINTS" id="PR00298">
    <property type="entry name" value="CHAPERONIN60"/>
</dbReference>
<dbReference type="SUPFAM" id="SSF52029">
    <property type="entry name" value="GroEL apical domain-like"/>
    <property type="match status" value="1"/>
</dbReference>
<dbReference type="SUPFAM" id="SSF48592">
    <property type="entry name" value="GroEL equatorial domain-like"/>
    <property type="match status" value="2"/>
</dbReference>
<dbReference type="PROSITE" id="PS00296">
    <property type="entry name" value="CHAPERONINS_CPN60"/>
    <property type="match status" value="1"/>
</dbReference>
<accession>Q10WQ4</accession>
<feature type="chain" id="PRO_0000332098" description="Chaperonin GroEL 2">
    <location>
        <begin position="1"/>
        <end position="544"/>
    </location>
</feature>
<feature type="binding site" evidence="1">
    <location>
        <begin position="29"/>
        <end position="32"/>
    </location>
    <ligand>
        <name>ATP</name>
        <dbReference type="ChEBI" id="CHEBI:30616"/>
    </ligand>
</feature>
<feature type="binding site" evidence="1">
    <location>
        <begin position="86"/>
        <end position="90"/>
    </location>
    <ligand>
        <name>ATP</name>
        <dbReference type="ChEBI" id="CHEBI:30616"/>
    </ligand>
</feature>
<feature type="binding site" evidence="1">
    <location>
        <position position="413"/>
    </location>
    <ligand>
        <name>ATP</name>
        <dbReference type="ChEBI" id="CHEBI:30616"/>
    </ligand>
</feature>
<feature type="binding site" evidence="1">
    <location>
        <begin position="479"/>
        <end position="481"/>
    </location>
    <ligand>
        <name>ATP</name>
        <dbReference type="ChEBI" id="CHEBI:30616"/>
    </ligand>
</feature>
<feature type="binding site" evidence="1">
    <location>
        <position position="495"/>
    </location>
    <ligand>
        <name>ATP</name>
        <dbReference type="ChEBI" id="CHEBI:30616"/>
    </ligand>
</feature>
<reference key="1">
    <citation type="journal article" date="2015" name="Proc. Natl. Acad. Sci. U.S.A.">
        <title>Trichodesmium genome maintains abundant, widespread noncoding DNA in situ, despite oligotrophic lifestyle.</title>
        <authorList>
            <person name="Walworth N."/>
            <person name="Pfreundt U."/>
            <person name="Nelson W.C."/>
            <person name="Mincer T."/>
            <person name="Heidelberg J.F."/>
            <person name="Fu F."/>
            <person name="Waterbury J.B."/>
            <person name="Glavina del Rio T."/>
            <person name="Goodwin L."/>
            <person name="Kyrpides N.C."/>
            <person name="Land M.L."/>
            <person name="Woyke T."/>
            <person name="Hutchins D.A."/>
            <person name="Hess W.R."/>
            <person name="Webb E.A."/>
        </authorList>
    </citation>
    <scope>NUCLEOTIDE SEQUENCE [LARGE SCALE GENOMIC DNA]</scope>
    <source>
        <strain>IMS101</strain>
    </source>
</reference>
<evidence type="ECO:0000255" key="1">
    <source>
        <dbReference type="HAMAP-Rule" id="MF_00600"/>
    </source>
</evidence>
<protein>
    <recommendedName>
        <fullName evidence="1">Chaperonin GroEL 2</fullName>
        <ecNumber evidence="1">5.6.1.7</ecNumber>
    </recommendedName>
    <alternativeName>
        <fullName evidence="1">60 kDa chaperonin 2</fullName>
    </alternativeName>
    <alternativeName>
        <fullName evidence="1">Chaperonin-60 2</fullName>
        <shortName evidence="1">Cpn60 2</shortName>
    </alternativeName>
</protein>
<comment type="function">
    <text evidence="1">Together with its co-chaperonin GroES, plays an essential role in assisting protein folding. The GroEL-GroES system forms a nano-cage that allows encapsulation of the non-native substrate proteins and provides a physical environment optimized to promote and accelerate protein folding.</text>
</comment>
<comment type="catalytic activity">
    <reaction evidence="1">
        <text>ATP + H2O + a folded polypeptide = ADP + phosphate + an unfolded polypeptide.</text>
        <dbReference type="EC" id="5.6.1.7"/>
    </reaction>
</comment>
<comment type="subunit">
    <text evidence="1">Forms a cylinder of 14 subunits composed of two heptameric rings stacked back-to-back. Interacts with the co-chaperonin GroES.</text>
</comment>
<comment type="subcellular location">
    <subcellularLocation>
        <location evidence="1">Cytoplasm</location>
    </subcellularLocation>
</comment>
<comment type="similarity">
    <text evidence="1">Belongs to the chaperonin (HSP60) family.</text>
</comment>
<organism>
    <name type="scientific">Trichodesmium erythraeum (strain IMS101)</name>
    <dbReference type="NCBI Taxonomy" id="203124"/>
    <lineage>
        <taxon>Bacteria</taxon>
        <taxon>Bacillati</taxon>
        <taxon>Cyanobacteriota</taxon>
        <taxon>Cyanophyceae</taxon>
        <taxon>Oscillatoriophycideae</taxon>
        <taxon>Oscillatoriales</taxon>
        <taxon>Microcoleaceae</taxon>
        <taxon>Trichodesmium</taxon>
    </lineage>
</organism>
<gene>
    <name evidence="1" type="primary">groEL2</name>
    <name evidence="1" type="synonym">groL2</name>
    <name type="ordered locus">Tery_4327</name>
</gene>
<sequence>MAKRIIYNENARRALEKGMDILAESVAVTLGPKGRNVVLEKKFGAPQIVNDGVTIAKEIELEDHVENTGVSLIRQAASKTNDAAGDGTTTATVLAHAMVKEGLRNVAAGANPIALKRGIDKAAGFLVEKIAEHARQIEDSKAIAQVGAISAGNDEEVGKMIAEAMDKVGKEGVISLEEGKSMQTELEITEGMRFDKGYISPYFATDMERMEASLEEPQILITDKKIALVQDLVPVLEQVARSGKPLLILAEDIEKEALATLVVNRLRGVVNVAAVKAPGFGDRRKAMLEDIAVLTGGQVITEDAGLKLENAKLDMLGKARRITITKDNTTIVAEGNEKEVKARCEQIRRQMDETDSSYDKEKLQERLAKLAGGVAVVKVGAATETEMKDRKLRLEDAINATKAAVEEGIVPGGGTTLAHLAPELETWANENLQSEELTGSLIVSRALLAPLKRIAENAGQNGAVIGERVKEKDFNTGFNAANNEFVDMFEAGIVDPAKVTRSALQNAASIAGMVLTTECIVVDKPEPKENAPAGAGMGGGDFDY</sequence>
<name>CH602_TRIEI</name>
<proteinExistence type="inferred from homology"/>
<keyword id="KW-0067">ATP-binding</keyword>
<keyword id="KW-0143">Chaperone</keyword>
<keyword id="KW-0963">Cytoplasm</keyword>
<keyword id="KW-0413">Isomerase</keyword>
<keyword id="KW-0547">Nucleotide-binding</keyword>